<comment type="function">
    <text evidence="1">DNA-dependent RNA polymerase catalyzes the transcription of DNA into RNA using the four ribonucleoside triphosphates as substrates.</text>
</comment>
<comment type="catalytic activity">
    <reaction evidence="1">
        <text>RNA(n) + a ribonucleoside 5'-triphosphate = RNA(n+1) + diphosphate</text>
        <dbReference type="Rhea" id="RHEA:21248"/>
        <dbReference type="Rhea" id="RHEA-COMP:14527"/>
        <dbReference type="Rhea" id="RHEA-COMP:17342"/>
        <dbReference type="ChEBI" id="CHEBI:33019"/>
        <dbReference type="ChEBI" id="CHEBI:61557"/>
        <dbReference type="ChEBI" id="CHEBI:140395"/>
        <dbReference type="EC" id="2.7.7.6"/>
    </reaction>
</comment>
<comment type="subunit">
    <text evidence="1">In plastids the minimal PEP RNA polymerase catalytic core is composed of four subunits: alpha, beta, beta', and beta''. When a (nuclear-encoded) sigma factor is associated with the core the holoenzyme is formed, which can initiate transcription.</text>
</comment>
<comment type="subcellular location">
    <subcellularLocation>
        <location>Plastid</location>
        <location>Chloroplast</location>
    </subcellularLocation>
</comment>
<comment type="domain">
    <text evidence="1">The N-terminal domain is essential for RNAP assembly and basal transcription, whereas the C-terminal domain is involved in interaction with transcriptional regulators and with upstream promoter elements.</text>
</comment>
<comment type="similarity">
    <text evidence="1">Belongs to the RNA polymerase alpha chain family.</text>
</comment>
<proteinExistence type="inferred from homology"/>
<dbReference type="EC" id="2.7.7.6" evidence="1"/>
<dbReference type="EMBL" id="Z77769">
    <property type="protein sequence ID" value="CAB01384.1"/>
    <property type="molecule type" value="Genomic_DNA"/>
</dbReference>
<dbReference type="RefSeq" id="YP_009672087.1">
    <property type="nucleotide sequence ID" value="NC_043837.1"/>
</dbReference>
<dbReference type="SMR" id="P92439"/>
<dbReference type="GeneID" id="40879793"/>
<dbReference type="GO" id="GO:0009507">
    <property type="term" value="C:chloroplast"/>
    <property type="evidence" value="ECO:0007669"/>
    <property type="project" value="UniProtKB-SubCell"/>
</dbReference>
<dbReference type="GO" id="GO:0000428">
    <property type="term" value="C:DNA-directed RNA polymerase complex"/>
    <property type="evidence" value="ECO:0007669"/>
    <property type="project" value="UniProtKB-KW"/>
</dbReference>
<dbReference type="GO" id="GO:0005739">
    <property type="term" value="C:mitochondrion"/>
    <property type="evidence" value="ECO:0007669"/>
    <property type="project" value="GOC"/>
</dbReference>
<dbReference type="GO" id="GO:0003677">
    <property type="term" value="F:DNA binding"/>
    <property type="evidence" value="ECO:0007669"/>
    <property type="project" value="UniProtKB-UniRule"/>
</dbReference>
<dbReference type="GO" id="GO:0003899">
    <property type="term" value="F:DNA-directed RNA polymerase activity"/>
    <property type="evidence" value="ECO:0007669"/>
    <property type="project" value="UniProtKB-UniRule"/>
</dbReference>
<dbReference type="GO" id="GO:0046983">
    <property type="term" value="F:protein dimerization activity"/>
    <property type="evidence" value="ECO:0007669"/>
    <property type="project" value="InterPro"/>
</dbReference>
<dbReference type="GO" id="GO:0006351">
    <property type="term" value="P:DNA-templated transcription"/>
    <property type="evidence" value="ECO:0007669"/>
    <property type="project" value="UniProtKB-UniRule"/>
</dbReference>
<dbReference type="CDD" id="cd06928">
    <property type="entry name" value="RNAP_alpha_NTD"/>
    <property type="match status" value="1"/>
</dbReference>
<dbReference type="FunFam" id="2.170.120.12:FF:000001">
    <property type="entry name" value="DNA-directed RNA polymerase subunit alpha"/>
    <property type="match status" value="1"/>
</dbReference>
<dbReference type="Gene3D" id="1.10.150.20">
    <property type="entry name" value="5' to 3' exonuclease, C-terminal subdomain"/>
    <property type="match status" value="1"/>
</dbReference>
<dbReference type="Gene3D" id="2.170.120.12">
    <property type="entry name" value="DNA-directed RNA polymerase, insert domain"/>
    <property type="match status" value="1"/>
</dbReference>
<dbReference type="Gene3D" id="3.30.1360.10">
    <property type="entry name" value="RNA polymerase, RBP11-like subunit"/>
    <property type="match status" value="1"/>
</dbReference>
<dbReference type="HAMAP" id="MF_00059">
    <property type="entry name" value="RNApol_bact_RpoA"/>
    <property type="match status" value="1"/>
</dbReference>
<dbReference type="InterPro" id="IPR011262">
    <property type="entry name" value="DNA-dir_RNA_pol_insert"/>
</dbReference>
<dbReference type="InterPro" id="IPR011263">
    <property type="entry name" value="DNA-dir_RNA_pol_RpoA/D/Rpb3"/>
</dbReference>
<dbReference type="InterPro" id="IPR011773">
    <property type="entry name" value="DNA-dir_RpoA"/>
</dbReference>
<dbReference type="InterPro" id="IPR036603">
    <property type="entry name" value="RBP11-like"/>
</dbReference>
<dbReference type="InterPro" id="IPR011260">
    <property type="entry name" value="RNAP_asu_C"/>
</dbReference>
<dbReference type="InterPro" id="IPR036643">
    <property type="entry name" value="RNApol_insert_sf"/>
</dbReference>
<dbReference type="NCBIfam" id="TIGR02027">
    <property type="entry name" value="rpoA"/>
    <property type="match status" value="1"/>
</dbReference>
<dbReference type="Pfam" id="PF01000">
    <property type="entry name" value="RNA_pol_A_bac"/>
    <property type="match status" value="1"/>
</dbReference>
<dbReference type="Pfam" id="PF03118">
    <property type="entry name" value="RNA_pol_A_CTD"/>
    <property type="match status" value="1"/>
</dbReference>
<dbReference type="Pfam" id="PF01193">
    <property type="entry name" value="RNA_pol_L"/>
    <property type="match status" value="1"/>
</dbReference>
<dbReference type="SMART" id="SM00662">
    <property type="entry name" value="RPOLD"/>
    <property type="match status" value="1"/>
</dbReference>
<dbReference type="SUPFAM" id="SSF47789">
    <property type="entry name" value="C-terminal domain of RNA polymerase alpha subunit"/>
    <property type="match status" value="1"/>
</dbReference>
<dbReference type="SUPFAM" id="SSF56553">
    <property type="entry name" value="Insert subdomain of RNA polymerase alpha subunit"/>
    <property type="match status" value="1"/>
</dbReference>
<dbReference type="SUPFAM" id="SSF55257">
    <property type="entry name" value="RBP11-like subunits of RNA polymerase"/>
    <property type="match status" value="1"/>
</dbReference>
<sequence>MVREEVAGSTQTLQWKCVESRVDSKRLYYGRFILSPLRKGQADTVGIALRRALLGEIEGTCITRAKFGSVPHEYSTIAGIEESVQEILLNLKEIVLRSNLYGVRDASICVKGPRYITAQDIILPPSVEIVDTAQPIANLTEPIDFCIDLQIKRDRGYQTELRKNYQDGSYPIDAVSMPVRNVNYSIFSCGNGNEKHEILFLEIWTNGSLTPKEALYEASRNLIDLFLPFLHAEEEGTSFEENKNRFTPPPFTFQKRLTNLKKNKKGIPLNCIFIDQLELTSRTYNCLKRANIHTLLDLLSKTEEDLLRIDSFRMEDRKHIWDTLEKHLPIDLLKNKLSF</sequence>
<keyword id="KW-0150">Chloroplast</keyword>
<keyword id="KW-0240">DNA-directed RNA polymerase</keyword>
<keyword id="KW-0548">Nucleotidyltransferase</keyword>
<keyword id="KW-0934">Plastid</keyword>
<keyword id="KW-0804">Transcription</keyword>
<keyword id="KW-0808">Transferase</keyword>
<gene>
    <name evidence="1" type="primary">rpoA</name>
</gene>
<name>RPOA_THIBE</name>
<geneLocation type="chloroplast"/>
<protein>
    <recommendedName>
        <fullName evidence="1">DNA-directed RNA polymerase subunit alpha</fullName>
        <shortName evidence="1">PEP</shortName>
        <ecNumber evidence="1">2.7.7.6</ecNumber>
    </recommendedName>
    <alternativeName>
        <fullName evidence="1">Plastid-encoded RNA polymerase subunit alpha</fullName>
        <shortName evidence="1">RNA polymerase subunit alpha</shortName>
    </alternativeName>
</protein>
<reference key="1">
    <citation type="journal article" date="1997" name="Mol. Phylogenet. Evol.">
        <title>Phylogenetic analysis of the Triticeae (Poaceae) based on rpoA sequence data.</title>
        <authorList>
            <person name="Petersen G."/>
            <person name="Seberg O."/>
        </authorList>
    </citation>
    <scope>NUCLEOTIDE SEQUENCE [GENOMIC DNA]</scope>
    <source>
        <strain>H6725</strain>
        <tissue>Leaf</tissue>
    </source>
</reference>
<evidence type="ECO:0000255" key="1">
    <source>
        <dbReference type="HAMAP-Rule" id="MF_00059"/>
    </source>
</evidence>
<accession>P92439</accession>
<feature type="chain" id="PRO_0000175501" description="DNA-directed RNA polymerase subunit alpha">
    <location>
        <begin position="1"/>
        <end position="339"/>
    </location>
</feature>
<feature type="region of interest" description="Alpha N-terminal domain (alpha-NTD)" evidence="1">
    <location>
        <begin position="1"/>
        <end position="233"/>
    </location>
</feature>
<feature type="region of interest" description="Alpha C-terminal domain (alpha-CTD)" evidence="1">
    <location>
        <begin position="264"/>
        <end position="339"/>
    </location>
</feature>
<organism>
    <name type="scientific">Thinopyrum bessarabicum</name>
    <name type="common">Wheatgrass</name>
    <name type="synonym">Elytrigia bessarabica</name>
    <dbReference type="NCBI Taxonomy" id="4601"/>
    <lineage>
        <taxon>Eukaryota</taxon>
        <taxon>Viridiplantae</taxon>
        <taxon>Streptophyta</taxon>
        <taxon>Embryophyta</taxon>
        <taxon>Tracheophyta</taxon>
        <taxon>Spermatophyta</taxon>
        <taxon>Magnoliopsida</taxon>
        <taxon>Liliopsida</taxon>
        <taxon>Poales</taxon>
        <taxon>Poaceae</taxon>
        <taxon>BOP clade</taxon>
        <taxon>Pooideae</taxon>
        <taxon>Triticodae</taxon>
        <taxon>Triticeae</taxon>
        <taxon>Triticinae</taxon>
        <taxon>Thinopyrum</taxon>
    </lineage>
</organism>